<evidence type="ECO:0000250" key="1"/>
<evidence type="ECO:0000256" key="2">
    <source>
        <dbReference type="SAM" id="MobiDB-lite"/>
    </source>
</evidence>
<evidence type="ECO:0000305" key="3"/>
<gene>
    <name type="primary">CAF20</name>
    <name type="ordered locus">CAGL0L10978g</name>
</gene>
<name>CAF20_CANGA</name>
<dbReference type="EMBL" id="CR380958">
    <property type="protein sequence ID" value="CAG62219.1"/>
    <property type="molecule type" value="Genomic_DNA"/>
</dbReference>
<dbReference type="RefSeq" id="XP_449245.1">
    <property type="nucleotide sequence ID" value="XM_449245.1"/>
</dbReference>
<dbReference type="SMR" id="Q6FKJ9"/>
<dbReference type="FunCoup" id="Q6FKJ9">
    <property type="interactions" value="385"/>
</dbReference>
<dbReference type="STRING" id="284593.Q6FKJ9"/>
<dbReference type="EnsemblFungi" id="CAGL0L10978g-T">
    <property type="protein sequence ID" value="CAGL0L10978g-T-p1"/>
    <property type="gene ID" value="CAGL0L10978g"/>
</dbReference>
<dbReference type="KEGG" id="cgr:2891020"/>
<dbReference type="CGD" id="CAL0135778">
    <property type="gene designation" value="CAGL0L10978g"/>
</dbReference>
<dbReference type="VEuPathDB" id="FungiDB:B1J91_L10978g"/>
<dbReference type="VEuPathDB" id="FungiDB:CAGL0L10978g"/>
<dbReference type="eggNOG" id="ENOG502S2E7">
    <property type="taxonomic scope" value="Eukaryota"/>
</dbReference>
<dbReference type="HOGENOM" id="CLU_128343_0_0_1"/>
<dbReference type="InParanoid" id="Q6FKJ9"/>
<dbReference type="OMA" id="GRPKVKH"/>
<dbReference type="Proteomes" id="UP000002428">
    <property type="component" value="Chromosome L"/>
</dbReference>
<dbReference type="GO" id="GO:0005737">
    <property type="term" value="C:cytoplasm"/>
    <property type="evidence" value="ECO:0007669"/>
    <property type="project" value="UniProtKB-SubCell"/>
</dbReference>
<dbReference type="GO" id="GO:0008190">
    <property type="term" value="F:eukaryotic initiation factor 4E binding"/>
    <property type="evidence" value="ECO:0007669"/>
    <property type="project" value="EnsemblFungi"/>
</dbReference>
<dbReference type="GO" id="GO:0003743">
    <property type="term" value="F:translation initiation factor activity"/>
    <property type="evidence" value="ECO:0007669"/>
    <property type="project" value="UniProtKB-KW"/>
</dbReference>
<dbReference type="GO" id="GO:0030447">
    <property type="term" value="P:filamentous growth"/>
    <property type="evidence" value="ECO:0007669"/>
    <property type="project" value="EnsemblFungi"/>
</dbReference>
<dbReference type="GO" id="GO:0017148">
    <property type="term" value="P:negative regulation of translation"/>
    <property type="evidence" value="ECO:0007669"/>
    <property type="project" value="UniProtKB-KW"/>
</dbReference>
<dbReference type="GO" id="GO:0010606">
    <property type="term" value="P:positive regulation of cytoplasmic mRNA processing body assembly"/>
    <property type="evidence" value="ECO:0007669"/>
    <property type="project" value="EnsemblFungi"/>
</dbReference>
<dbReference type="GO" id="GO:0045727">
    <property type="term" value="P:positive regulation of translation"/>
    <property type="evidence" value="ECO:0007669"/>
    <property type="project" value="EnsemblFungi"/>
</dbReference>
<dbReference type="InterPro" id="IPR031456">
    <property type="entry name" value="Caf20"/>
</dbReference>
<dbReference type="Pfam" id="PF17052">
    <property type="entry name" value="CAF20"/>
    <property type="match status" value="1"/>
</dbReference>
<protein>
    <recommendedName>
        <fullName>Cap-associated protein CAF20</fullName>
    </recommendedName>
</protein>
<feature type="chain" id="PRO_0000330085" description="Cap-associated protein CAF20">
    <location>
        <begin position="1"/>
        <end position="154"/>
    </location>
</feature>
<feature type="region of interest" description="Disordered" evidence="2">
    <location>
        <begin position="45"/>
        <end position="137"/>
    </location>
</feature>
<feature type="compositionally biased region" description="Basic residues" evidence="2">
    <location>
        <begin position="48"/>
        <end position="70"/>
    </location>
</feature>
<feature type="compositionally biased region" description="Low complexity" evidence="2">
    <location>
        <begin position="93"/>
        <end position="108"/>
    </location>
</feature>
<feature type="compositionally biased region" description="Polar residues" evidence="2">
    <location>
        <begin position="118"/>
        <end position="128"/>
    </location>
</feature>
<organism>
    <name type="scientific">Candida glabrata (strain ATCC 2001 / BCRC 20586 / JCM 3761 / NBRC 0622 / NRRL Y-65 / CBS 138)</name>
    <name type="common">Yeast</name>
    <name type="synonym">Nakaseomyces glabratus</name>
    <dbReference type="NCBI Taxonomy" id="284593"/>
    <lineage>
        <taxon>Eukaryota</taxon>
        <taxon>Fungi</taxon>
        <taxon>Dikarya</taxon>
        <taxon>Ascomycota</taxon>
        <taxon>Saccharomycotina</taxon>
        <taxon>Saccharomycetes</taxon>
        <taxon>Saccharomycetales</taxon>
        <taxon>Saccharomycetaceae</taxon>
        <taxon>Nakaseomyces</taxon>
    </lineage>
</organism>
<accession>Q6FKJ9</accession>
<sequence length="154" mass="17274">MIKYSIDELIQLKPSETLKVSFDHVEFRNIIEKVVELQKLKEEEFHSHHGNRRRSSHHHMKPKIKHNKPKVKTDADGWSTLEPATAGHEEESSSSATPAAAATTKTGAPQETIRVKPNNKNISSSRPADNSDIIADKQTHGFNAFAALEDEEDE</sequence>
<reference key="1">
    <citation type="journal article" date="2004" name="Nature">
        <title>Genome evolution in yeasts.</title>
        <authorList>
            <person name="Dujon B."/>
            <person name="Sherman D."/>
            <person name="Fischer G."/>
            <person name="Durrens P."/>
            <person name="Casaregola S."/>
            <person name="Lafontaine I."/>
            <person name="de Montigny J."/>
            <person name="Marck C."/>
            <person name="Neuveglise C."/>
            <person name="Talla E."/>
            <person name="Goffard N."/>
            <person name="Frangeul L."/>
            <person name="Aigle M."/>
            <person name="Anthouard V."/>
            <person name="Babour A."/>
            <person name="Barbe V."/>
            <person name="Barnay S."/>
            <person name="Blanchin S."/>
            <person name="Beckerich J.-M."/>
            <person name="Beyne E."/>
            <person name="Bleykasten C."/>
            <person name="Boisrame A."/>
            <person name="Boyer J."/>
            <person name="Cattolico L."/>
            <person name="Confanioleri F."/>
            <person name="de Daruvar A."/>
            <person name="Despons L."/>
            <person name="Fabre E."/>
            <person name="Fairhead C."/>
            <person name="Ferry-Dumazet H."/>
            <person name="Groppi A."/>
            <person name="Hantraye F."/>
            <person name="Hennequin C."/>
            <person name="Jauniaux N."/>
            <person name="Joyet P."/>
            <person name="Kachouri R."/>
            <person name="Kerrest A."/>
            <person name="Koszul R."/>
            <person name="Lemaire M."/>
            <person name="Lesur I."/>
            <person name="Ma L."/>
            <person name="Muller H."/>
            <person name="Nicaud J.-M."/>
            <person name="Nikolski M."/>
            <person name="Oztas S."/>
            <person name="Ozier-Kalogeropoulos O."/>
            <person name="Pellenz S."/>
            <person name="Potier S."/>
            <person name="Richard G.-F."/>
            <person name="Straub M.-L."/>
            <person name="Suleau A."/>
            <person name="Swennen D."/>
            <person name="Tekaia F."/>
            <person name="Wesolowski-Louvel M."/>
            <person name="Westhof E."/>
            <person name="Wirth B."/>
            <person name="Zeniou-Meyer M."/>
            <person name="Zivanovic Y."/>
            <person name="Bolotin-Fukuhara M."/>
            <person name="Thierry A."/>
            <person name="Bouchier C."/>
            <person name="Caudron B."/>
            <person name="Scarpelli C."/>
            <person name="Gaillardin C."/>
            <person name="Weissenbach J."/>
            <person name="Wincker P."/>
            <person name="Souciet J.-L."/>
        </authorList>
    </citation>
    <scope>NUCLEOTIDE SEQUENCE [LARGE SCALE GENOMIC DNA]</scope>
    <source>
        <strain>ATCC 2001 / BCRC 20586 / JCM 3761 / NBRC 0622 / NRRL Y-65 / CBS 138</strain>
    </source>
</reference>
<proteinExistence type="inferred from homology"/>
<comment type="function">
    <text evidence="1">Acts as an inhibitor of cap-dependent translation. Competes with eIF4G1 and EAP1 for binding to eIF4E and interferes with the formation of the eIF4F complex, inhibiting translation and stabilizing mRNA (By similarity).</text>
</comment>
<comment type="subcellular location">
    <subcellularLocation>
        <location evidence="1">Cytoplasm</location>
    </subcellularLocation>
</comment>
<comment type="similarity">
    <text evidence="3">Belongs to the CAF20 family.</text>
</comment>
<keyword id="KW-0963">Cytoplasm</keyword>
<keyword id="KW-0396">Initiation factor</keyword>
<keyword id="KW-0597">Phosphoprotein</keyword>
<keyword id="KW-0648">Protein biosynthesis</keyword>
<keyword id="KW-0652">Protein synthesis inhibitor</keyword>
<keyword id="KW-1185">Reference proteome</keyword>
<keyword id="KW-0810">Translation regulation</keyword>